<gene>
    <name evidence="9" type="primary">AA9F</name>
    <name type="ORF">BCIN_11g05360</name>
</gene>
<keyword id="KW-0119">Carbohydrate metabolism</keyword>
<keyword id="KW-0136">Cellulose degradation</keyword>
<keyword id="KW-0186">Copper</keyword>
<keyword id="KW-1015">Disulfide bond</keyword>
<keyword id="KW-0325">Glycoprotein</keyword>
<keyword id="KW-0479">Metal-binding</keyword>
<keyword id="KW-0503">Monooxygenase</keyword>
<keyword id="KW-0560">Oxidoreductase</keyword>
<keyword id="KW-0624">Polysaccharide degradation</keyword>
<keyword id="KW-1185">Reference proteome</keyword>
<keyword id="KW-0964">Secreted</keyword>
<keyword id="KW-0732">Signal</keyword>
<feature type="signal peptide" evidence="6">
    <location>
        <begin position="1"/>
        <end position="18"/>
    </location>
</feature>
<feature type="chain" id="PRO_5016863723" description="AA9 family lytic polysaccharide monooxygenase F" evidence="6">
    <location>
        <begin position="19"/>
        <end position="250"/>
    </location>
</feature>
<feature type="binding site" evidence="1">
    <location>
        <position position="19"/>
    </location>
    <ligand>
        <name>Cu(2+)</name>
        <dbReference type="ChEBI" id="CHEBI:29036"/>
    </ligand>
</feature>
<feature type="binding site" evidence="4">
    <location>
        <position position="108"/>
    </location>
    <ligand>
        <name>Cu(2+)</name>
        <dbReference type="ChEBI" id="CHEBI:29036"/>
    </ligand>
</feature>
<feature type="binding site" evidence="3">
    <location>
        <position position="185"/>
    </location>
    <ligand>
        <name>O2</name>
        <dbReference type="ChEBI" id="CHEBI:15379"/>
    </ligand>
</feature>
<feature type="binding site" evidence="3">
    <location>
        <position position="194"/>
    </location>
    <ligand>
        <name>O2</name>
        <dbReference type="ChEBI" id="CHEBI:15379"/>
    </ligand>
</feature>
<feature type="binding site" evidence="1">
    <location>
        <position position="196"/>
    </location>
    <ligand>
        <name>Cu(2+)</name>
        <dbReference type="ChEBI" id="CHEBI:29036"/>
    </ligand>
</feature>
<feature type="glycosylation site" description="N-linked (GlcNAc...) asparagine" evidence="7">
    <location>
        <position position="24"/>
    </location>
</feature>
<feature type="glycosylation site" description="N-linked (GlcNAc...) asparagine" evidence="7">
    <location>
        <position position="85"/>
    </location>
</feature>
<feature type="glycosylation site" description="N-linked (GlcNAc...) asparagine" evidence="7">
    <location>
        <position position="146"/>
    </location>
</feature>
<feature type="disulfide bond" evidence="5">
    <location>
        <begin position="70"/>
        <end position="199"/>
    </location>
</feature>
<feature type="disulfide bond" evidence="2">
    <location>
        <begin position="169"/>
        <end position="250"/>
    </location>
</feature>
<dbReference type="EC" id="1.14.99.56" evidence="11"/>
<dbReference type="EMBL" id="CP009815">
    <property type="protein sequence ID" value="ATZ55262.1"/>
    <property type="molecule type" value="Genomic_DNA"/>
</dbReference>
<dbReference type="SMR" id="A0A384JXL6"/>
<dbReference type="EnsemblFungi" id="Bcin11g05360.1">
    <property type="protein sequence ID" value="Bcin11p05360.1"/>
    <property type="gene ID" value="Bcin11g05360"/>
</dbReference>
<dbReference type="VEuPathDB" id="FungiDB:Bcin11g05360"/>
<dbReference type="OrthoDB" id="4849160at2759"/>
<dbReference type="Proteomes" id="UP000001798">
    <property type="component" value="Chromosome bcin11"/>
</dbReference>
<dbReference type="GO" id="GO:0005576">
    <property type="term" value="C:extracellular region"/>
    <property type="evidence" value="ECO:0007669"/>
    <property type="project" value="UniProtKB-SubCell"/>
</dbReference>
<dbReference type="GO" id="GO:0046872">
    <property type="term" value="F:metal ion binding"/>
    <property type="evidence" value="ECO:0007669"/>
    <property type="project" value="UniProtKB-KW"/>
</dbReference>
<dbReference type="GO" id="GO:0004497">
    <property type="term" value="F:monooxygenase activity"/>
    <property type="evidence" value="ECO:0007669"/>
    <property type="project" value="UniProtKB-KW"/>
</dbReference>
<dbReference type="GO" id="GO:0030245">
    <property type="term" value="P:cellulose catabolic process"/>
    <property type="evidence" value="ECO:0007669"/>
    <property type="project" value="UniProtKB-KW"/>
</dbReference>
<dbReference type="CDD" id="cd21175">
    <property type="entry name" value="LPMO_AA9"/>
    <property type="match status" value="1"/>
</dbReference>
<dbReference type="Gene3D" id="2.70.50.70">
    <property type="match status" value="1"/>
</dbReference>
<dbReference type="InterPro" id="IPR049892">
    <property type="entry name" value="AA9"/>
</dbReference>
<dbReference type="InterPro" id="IPR005103">
    <property type="entry name" value="AA9_LPMO"/>
</dbReference>
<dbReference type="PANTHER" id="PTHR33353:SF6">
    <property type="entry name" value="ENDOGLUCANASE IV"/>
    <property type="match status" value="1"/>
</dbReference>
<dbReference type="PANTHER" id="PTHR33353">
    <property type="entry name" value="PUTATIVE (AFU_ORTHOLOGUE AFUA_1G12560)-RELATED"/>
    <property type="match status" value="1"/>
</dbReference>
<dbReference type="Pfam" id="PF03443">
    <property type="entry name" value="AA9"/>
    <property type="match status" value="1"/>
</dbReference>
<name>LP9F_BOTFB</name>
<comment type="function">
    <text evidence="11">Lytic polysaccharide monooxygenase (LPMO) that depolymerizes crystalline and amorphous polysaccharides via the oxidation of scissile alpha- or beta-(1-4)-glycosidic bonds, yielding C1 and C4 oxidation products (Probable). Catalysis by LPMOs requires the reduction of the active-site copper from Cu(II) to Cu(I) by a reducing agent and H(2)O(2) or O(2) as a cosubstrate (Probable).</text>
</comment>
<comment type="catalytic activity">
    <reaction evidence="11">
        <text>[(1-&gt;4)-beta-D-glucosyl]n+m + reduced acceptor + O2 = 4-dehydro-beta-D-glucosyl-[(1-&gt;4)-beta-D-glucosyl]n-1 + [(1-&gt;4)-beta-D-glucosyl]m + acceptor + H2O.</text>
        <dbReference type="EC" id="1.14.99.56"/>
    </reaction>
</comment>
<comment type="cofactor">
    <cofactor evidence="11">
        <name>Cu(2+)</name>
        <dbReference type="ChEBI" id="CHEBI:29036"/>
    </cofactor>
    <text evidence="11">Binds 1 copper ion per subunit.</text>
</comment>
<comment type="subcellular location">
    <subcellularLocation>
        <location evidence="11">Secreted</location>
    </subcellularLocation>
</comment>
<comment type="induction">
    <text evidence="8">Expression is increased 8-fold in cellulose-inducible conditions (in Avicel- and wheat bran-containing complex medium).</text>
</comment>
<comment type="biotechnology">
    <text evidence="11">Lignocellulose is the most abundant polymeric composite on Earth and is a recalcitrant but promising renewable substrate for industrial biotechnology applications. Together with cellobiose dehydrogenases (CDHs) an enzymatic system capable of oxidative cellulose cleavage is formed, which increases the efficiency of cellulases and put LPMOs at focus of biofuel research.</text>
</comment>
<comment type="similarity">
    <text evidence="10">Belongs to the polysaccharide monooxygenase AA9 family.</text>
</comment>
<reference key="1">
    <citation type="journal article" date="2011" name="PLoS Genet.">
        <title>Genomic analysis of the necrotrophic fungal pathogens Sclerotinia sclerotiorum and Botrytis cinerea.</title>
        <authorList>
            <person name="Amselem J."/>
            <person name="Cuomo C.A."/>
            <person name="van Kan J.A.L."/>
            <person name="Viaud M."/>
            <person name="Benito E.P."/>
            <person name="Couloux A."/>
            <person name="Coutinho P.M."/>
            <person name="de Vries R.P."/>
            <person name="Dyer P.S."/>
            <person name="Fillinger S."/>
            <person name="Fournier E."/>
            <person name="Gout L."/>
            <person name="Hahn M."/>
            <person name="Kohn L."/>
            <person name="Lapalu N."/>
            <person name="Plummer K.M."/>
            <person name="Pradier J.-M."/>
            <person name="Quevillon E."/>
            <person name="Sharon A."/>
            <person name="Simon A."/>
            <person name="ten Have A."/>
            <person name="Tudzynski B."/>
            <person name="Tudzynski P."/>
            <person name="Wincker P."/>
            <person name="Andrew M."/>
            <person name="Anthouard V."/>
            <person name="Beever R.E."/>
            <person name="Beffa R."/>
            <person name="Benoit I."/>
            <person name="Bouzid O."/>
            <person name="Brault B."/>
            <person name="Chen Z."/>
            <person name="Choquer M."/>
            <person name="Collemare J."/>
            <person name="Cotton P."/>
            <person name="Danchin E.G."/>
            <person name="Da Silva C."/>
            <person name="Gautier A."/>
            <person name="Giraud C."/>
            <person name="Giraud T."/>
            <person name="Gonzalez C."/>
            <person name="Grossetete S."/>
            <person name="Gueldener U."/>
            <person name="Henrissat B."/>
            <person name="Howlett B.J."/>
            <person name="Kodira C."/>
            <person name="Kretschmer M."/>
            <person name="Lappartient A."/>
            <person name="Leroch M."/>
            <person name="Levis C."/>
            <person name="Mauceli E."/>
            <person name="Neuveglise C."/>
            <person name="Oeser B."/>
            <person name="Pearson M."/>
            <person name="Poulain J."/>
            <person name="Poussereau N."/>
            <person name="Quesneville H."/>
            <person name="Rascle C."/>
            <person name="Schumacher J."/>
            <person name="Segurens B."/>
            <person name="Sexton A."/>
            <person name="Silva E."/>
            <person name="Sirven C."/>
            <person name="Soanes D.M."/>
            <person name="Talbot N.J."/>
            <person name="Templeton M."/>
            <person name="Yandava C."/>
            <person name="Yarden O."/>
            <person name="Zeng Q."/>
            <person name="Rollins J.A."/>
            <person name="Lebrun M.-H."/>
            <person name="Dickman M."/>
        </authorList>
    </citation>
    <scope>NUCLEOTIDE SEQUENCE [LARGE SCALE GENOMIC DNA]</scope>
    <source>
        <strain>B05.10</strain>
    </source>
</reference>
<reference key="2">
    <citation type="journal article" date="2012" name="Eukaryot. Cell">
        <title>Genome update of Botrytis cinerea strains B05.10 and T4.</title>
        <authorList>
            <person name="Staats M."/>
            <person name="van Kan J.A.L."/>
        </authorList>
    </citation>
    <scope>NUCLEOTIDE SEQUENCE [LARGE SCALE GENOMIC DNA]</scope>
    <source>
        <strain>B05.10</strain>
    </source>
</reference>
<reference key="3">
    <citation type="journal article" date="2017" name="Mol. Plant Pathol.">
        <title>A gapless genome sequence of the fungus Botrytis cinerea.</title>
        <authorList>
            <person name="van Kan J.A.L."/>
            <person name="Stassen J.H.M."/>
            <person name="Mosbach A."/>
            <person name="van der Lee T.A.J."/>
            <person name="Faino L."/>
            <person name="Farmer A.D."/>
            <person name="Papasotiriou D.G."/>
            <person name="Zhou S."/>
            <person name="Seidl M.F."/>
            <person name="Cottam E."/>
            <person name="Edel D."/>
            <person name="Hahn M."/>
            <person name="Schwartz D.C."/>
            <person name="Dietrich R.A."/>
            <person name="Widdison S."/>
            <person name="Scalliet G."/>
        </authorList>
    </citation>
    <scope>NUCLEOTIDE SEQUENCE [LARGE SCALE GENOMIC DNA]</scope>
    <source>
        <strain>B05.10</strain>
    </source>
</reference>
<reference key="4">
    <citation type="journal article" date="2022" name="Microbiol. Spectr.">
        <title>The Linker Region Promotes Activity and Binding Efficiency of Modular LPMO towards Polymeric Substrate.</title>
        <authorList>
            <person name="Srivastava A."/>
            <person name="Nagar P."/>
            <person name="Rathore S."/>
            <person name="Adlakha N."/>
        </authorList>
    </citation>
    <scope>IDENTIFICATION</scope>
    <scope>INDUCTION</scope>
    <scope>FUNCTION</scope>
</reference>
<evidence type="ECO:0000250" key="1">
    <source>
        <dbReference type="UniProtKB" id="G2R6N0"/>
    </source>
</evidence>
<evidence type="ECO:0000250" key="2">
    <source>
        <dbReference type="UniProtKB" id="Q1K4Q1"/>
    </source>
</evidence>
<evidence type="ECO:0000250" key="3">
    <source>
        <dbReference type="UniProtKB" id="Q1K8B6"/>
    </source>
</evidence>
<evidence type="ECO:0000250" key="4">
    <source>
        <dbReference type="UniProtKB" id="Q4WP32"/>
    </source>
</evidence>
<evidence type="ECO:0000250" key="5">
    <source>
        <dbReference type="UniProtKB" id="Q7Z9M7"/>
    </source>
</evidence>
<evidence type="ECO:0000255" key="6"/>
<evidence type="ECO:0000255" key="7">
    <source>
        <dbReference type="PROSITE-ProRule" id="PRU00498"/>
    </source>
</evidence>
<evidence type="ECO:0000269" key="8">
    <source>
    </source>
</evidence>
<evidence type="ECO:0000303" key="9">
    <source>
    </source>
</evidence>
<evidence type="ECO:0000305" key="10"/>
<evidence type="ECO:0000305" key="11">
    <source>
    </source>
</evidence>
<accession>A0A384JXL6</accession>
<organism>
    <name type="scientific">Botryotinia fuckeliana (strain B05.10)</name>
    <name type="common">Noble rot fungus</name>
    <name type="synonym">Botrytis cinerea</name>
    <dbReference type="NCBI Taxonomy" id="332648"/>
    <lineage>
        <taxon>Eukaryota</taxon>
        <taxon>Fungi</taxon>
        <taxon>Dikarya</taxon>
        <taxon>Ascomycota</taxon>
        <taxon>Pezizomycotina</taxon>
        <taxon>Leotiomycetes</taxon>
        <taxon>Helotiales</taxon>
        <taxon>Sclerotiniaceae</taxon>
        <taxon>Botrytis</taxon>
    </lineage>
</organism>
<protein>
    <recommendedName>
        <fullName evidence="9">AA9 family lytic polysaccharide monooxygenase F</fullName>
        <shortName evidence="9">AA9F</shortName>
        <ecNumber evidence="11">1.14.99.56</ecNumber>
    </recommendedName>
    <alternativeName>
        <fullName evidence="10">Endo-1,4-beta-glucanase AA9F</fullName>
        <shortName evidence="10">Endoglucanase AA9F</shortName>
    </alternativeName>
    <alternativeName>
        <fullName evidence="10">Glycosyl hydrolase 61 family protein AA9F</fullName>
    </alternativeName>
</protein>
<proteinExistence type="evidence at transcript level"/>
<sequence>MHLKTFSNLLVFVATVAAHGYVDNVTVNGILYTGYQPNSDPYYATPPPRIIRPVQGNGPITDLTLIDLQCGGYTEGGIVGSQPANLTAGPVAAGSTVSLRWTLWPDSHSGPVITYMAKCPAAGCSTYVPGTAAVWFKIQATGRIGNTTVWGDTPLKTAGNSYSYTIPSCLSAGSYIVRHEILALHAAWTYPGVQFYPSCHQIQVTGSGTSTGPSSKVAIPGVYKATDPGIVYDMYAVQPYTIPGPAVFTC</sequence>